<sequence>MSRIGKQPIPVPSGVEVKLGADVVEVKGPKGSLTTPVSPLLKYEIQDGSVVITRVEETKKASAQHGLRRTLLANCIEGVSKGFSKVLEVNGVGYKVAVKGNNIELALGFSHPVVIELPKGIEAAAAGNKLTISGFDKQLVGEVAANIRRVRPPEPYKGKGVKYEHEQIRRKAGKSGGKK</sequence>
<dbReference type="EMBL" id="CP000112">
    <property type="protein sequence ID" value="ABB39039.1"/>
    <property type="molecule type" value="Genomic_DNA"/>
</dbReference>
<dbReference type="RefSeq" id="WP_011368130.1">
    <property type="nucleotide sequence ID" value="NC_007519.1"/>
</dbReference>
<dbReference type="SMR" id="Q30Z57"/>
<dbReference type="STRING" id="207559.Dde_2242"/>
<dbReference type="KEGG" id="dde:Dde_2242"/>
<dbReference type="eggNOG" id="COG0097">
    <property type="taxonomic scope" value="Bacteria"/>
</dbReference>
<dbReference type="HOGENOM" id="CLU_065464_1_2_7"/>
<dbReference type="Proteomes" id="UP000002710">
    <property type="component" value="Chromosome"/>
</dbReference>
<dbReference type="GO" id="GO:0022625">
    <property type="term" value="C:cytosolic large ribosomal subunit"/>
    <property type="evidence" value="ECO:0007669"/>
    <property type="project" value="TreeGrafter"/>
</dbReference>
<dbReference type="GO" id="GO:0019843">
    <property type="term" value="F:rRNA binding"/>
    <property type="evidence" value="ECO:0007669"/>
    <property type="project" value="UniProtKB-UniRule"/>
</dbReference>
<dbReference type="GO" id="GO:0003735">
    <property type="term" value="F:structural constituent of ribosome"/>
    <property type="evidence" value="ECO:0007669"/>
    <property type="project" value="InterPro"/>
</dbReference>
<dbReference type="GO" id="GO:0002181">
    <property type="term" value="P:cytoplasmic translation"/>
    <property type="evidence" value="ECO:0007669"/>
    <property type="project" value="TreeGrafter"/>
</dbReference>
<dbReference type="FunFam" id="3.90.930.12:FF:000001">
    <property type="entry name" value="50S ribosomal protein L6"/>
    <property type="match status" value="1"/>
</dbReference>
<dbReference type="FunFam" id="3.90.930.12:FF:000002">
    <property type="entry name" value="50S ribosomal protein L6"/>
    <property type="match status" value="1"/>
</dbReference>
<dbReference type="Gene3D" id="3.90.930.12">
    <property type="entry name" value="Ribosomal protein L6, alpha-beta domain"/>
    <property type="match status" value="2"/>
</dbReference>
<dbReference type="HAMAP" id="MF_01365_B">
    <property type="entry name" value="Ribosomal_uL6_B"/>
    <property type="match status" value="1"/>
</dbReference>
<dbReference type="InterPro" id="IPR000702">
    <property type="entry name" value="Ribosomal_uL6-like"/>
</dbReference>
<dbReference type="InterPro" id="IPR036789">
    <property type="entry name" value="Ribosomal_uL6-like_a/b-dom_sf"/>
</dbReference>
<dbReference type="InterPro" id="IPR020040">
    <property type="entry name" value="Ribosomal_uL6_a/b-dom"/>
</dbReference>
<dbReference type="InterPro" id="IPR019906">
    <property type="entry name" value="Ribosomal_uL6_bac-type"/>
</dbReference>
<dbReference type="InterPro" id="IPR002358">
    <property type="entry name" value="Ribosomal_uL6_CS"/>
</dbReference>
<dbReference type="NCBIfam" id="TIGR03654">
    <property type="entry name" value="L6_bact"/>
    <property type="match status" value="1"/>
</dbReference>
<dbReference type="PANTHER" id="PTHR11655">
    <property type="entry name" value="60S/50S RIBOSOMAL PROTEIN L6/L9"/>
    <property type="match status" value="1"/>
</dbReference>
<dbReference type="PANTHER" id="PTHR11655:SF14">
    <property type="entry name" value="LARGE RIBOSOMAL SUBUNIT PROTEIN UL6M"/>
    <property type="match status" value="1"/>
</dbReference>
<dbReference type="Pfam" id="PF00347">
    <property type="entry name" value="Ribosomal_L6"/>
    <property type="match status" value="2"/>
</dbReference>
<dbReference type="PIRSF" id="PIRSF002162">
    <property type="entry name" value="Ribosomal_L6"/>
    <property type="match status" value="1"/>
</dbReference>
<dbReference type="PRINTS" id="PR00059">
    <property type="entry name" value="RIBOSOMALL6"/>
</dbReference>
<dbReference type="SUPFAM" id="SSF56053">
    <property type="entry name" value="Ribosomal protein L6"/>
    <property type="match status" value="2"/>
</dbReference>
<dbReference type="PROSITE" id="PS00525">
    <property type="entry name" value="RIBOSOMAL_L6_1"/>
    <property type="match status" value="1"/>
</dbReference>
<organism>
    <name type="scientific">Oleidesulfovibrio alaskensis (strain ATCC BAA-1058 / DSM 17464 / G20)</name>
    <name type="common">Desulfovibrio alaskensis</name>
    <dbReference type="NCBI Taxonomy" id="207559"/>
    <lineage>
        <taxon>Bacteria</taxon>
        <taxon>Pseudomonadati</taxon>
        <taxon>Thermodesulfobacteriota</taxon>
        <taxon>Desulfovibrionia</taxon>
        <taxon>Desulfovibrionales</taxon>
        <taxon>Desulfovibrionaceae</taxon>
        <taxon>Oleidesulfovibrio</taxon>
    </lineage>
</organism>
<reference key="1">
    <citation type="journal article" date="2011" name="J. Bacteriol.">
        <title>Complete genome sequence and updated annotation of Desulfovibrio alaskensis G20.</title>
        <authorList>
            <person name="Hauser L.J."/>
            <person name="Land M.L."/>
            <person name="Brown S.D."/>
            <person name="Larimer F."/>
            <person name="Keller K.L."/>
            <person name="Rapp-Giles B.J."/>
            <person name="Price M.N."/>
            <person name="Lin M."/>
            <person name="Bruce D.C."/>
            <person name="Detter J.C."/>
            <person name="Tapia R."/>
            <person name="Han C.S."/>
            <person name="Goodwin L.A."/>
            <person name="Cheng J.F."/>
            <person name="Pitluck S."/>
            <person name="Copeland A."/>
            <person name="Lucas S."/>
            <person name="Nolan M."/>
            <person name="Lapidus A.L."/>
            <person name="Palumbo A.V."/>
            <person name="Wall J.D."/>
        </authorList>
    </citation>
    <scope>NUCLEOTIDE SEQUENCE [LARGE SCALE GENOMIC DNA]</scope>
    <source>
        <strain>ATCC BAA-1058 / DSM 17464 / G20</strain>
    </source>
</reference>
<feature type="chain" id="PRO_0000265248" description="Large ribosomal subunit protein uL6">
    <location>
        <begin position="1"/>
        <end position="179"/>
    </location>
</feature>
<feature type="region of interest" description="Disordered" evidence="2">
    <location>
        <begin position="154"/>
        <end position="179"/>
    </location>
</feature>
<feature type="compositionally biased region" description="Basic and acidic residues" evidence="2">
    <location>
        <begin position="154"/>
        <end position="169"/>
    </location>
</feature>
<feature type="compositionally biased region" description="Basic residues" evidence="2">
    <location>
        <begin position="170"/>
        <end position="179"/>
    </location>
</feature>
<accession>Q30Z57</accession>
<name>RL6_OLEA2</name>
<protein>
    <recommendedName>
        <fullName evidence="1">Large ribosomal subunit protein uL6</fullName>
    </recommendedName>
    <alternativeName>
        <fullName evidence="3">50S ribosomal protein L6</fullName>
    </alternativeName>
</protein>
<keyword id="KW-1185">Reference proteome</keyword>
<keyword id="KW-0687">Ribonucleoprotein</keyword>
<keyword id="KW-0689">Ribosomal protein</keyword>
<keyword id="KW-0694">RNA-binding</keyword>
<keyword id="KW-0699">rRNA-binding</keyword>
<gene>
    <name evidence="1" type="primary">rplF</name>
    <name type="ordered locus">Dde_2242</name>
</gene>
<evidence type="ECO:0000255" key="1">
    <source>
        <dbReference type="HAMAP-Rule" id="MF_01365"/>
    </source>
</evidence>
<evidence type="ECO:0000256" key="2">
    <source>
        <dbReference type="SAM" id="MobiDB-lite"/>
    </source>
</evidence>
<evidence type="ECO:0000305" key="3"/>
<comment type="function">
    <text evidence="1">This protein binds to the 23S rRNA, and is important in its secondary structure. It is located near the subunit interface in the base of the L7/L12 stalk, and near the tRNA binding site of the peptidyltransferase center.</text>
</comment>
<comment type="subunit">
    <text evidence="1">Part of the 50S ribosomal subunit.</text>
</comment>
<comment type="similarity">
    <text evidence="1">Belongs to the universal ribosomal protein uL6 family.</text>
</comment>
<proteinExistence type="inferred from homology"/>